<sequence length="130" mass="14491">MAQVQYYGTGRRKSSVARVRLVPGEGRVIINGRDFENYIPFAALREVVKQPLVATETLGNYDVLVNVNGGGYTGQAGAIRHGISRALLKADPEYRLTLKRAGLLTRDARMKERKKYGLKGARRAPQFSKR</sequence>
<protein>
    <recommendedName>
        <fullName evidence="1">Small ribosomal subunit protein uS9</fullName>
    </recommendedName>
    <alternativeName>
        <fullName evidence="2">30S ribosomal protein S9</fullName>
    </alternativeName>
</protein>
<reference key="1">
    <citation type="journal article" date="2003" name="Nature">
        <title>Genome sequence of Bacillus cereus and comparative analysis with Bacillus anthracis.</title>
        <authorList>
            <person name="Ivanova N."/>
            <person name="Sorokin A."/>
            <person name="Anderson I."/>
            <person name="Galleron N."/>
            <person name="Candelon B."/>
            <person name="Kapatral V."/>
            <person name="Bhattacharyya A."/>
            <person name="Reznik G."/>
            <person name="Mikhailova N."/>
            <person name="Lapidus A."/>
            <person name="Chu L."/>
            <person name="Mazur M."/>
            <person name="Goltsman E."/>
            <person name="Larsen N."/>
            <person name="D'Souza M."/>
            <person name="Walunas T."/>
            <person name="Grechkin Y."/>
            <person name="Pusch G."/>
            <person name="Haselkorn R."/>
            <person name="Fonstein M."/>
            <person name="Ehrlich S.D."/>
            <person name="Overbeek R."/>
            <person name="Kyrpides N.C."/>
        </authorList>
    </citation>
    <scope>NUCLEOTIDE SEQUENCE [LARGE SCALE GENOMIC DNA]</scope>
    <source>
        <strain>ATCC 14579 / DSM 31 / CCUG 7414 / JCM 2152 / NBRC 15305 / NCIMB 9373 / NCTC 2599 / NRRL B-3711</strain>
    </source>
</reference>
<name>RS9_BACCR</name>
<keyword id="KW-1185">Reference proteome</keyword>
<keyword id="KW-0687">Ribonucleoprotein</keyword>
<keyword id="KW-0689">Ribosomal protein</keyword>
<feature type="chain" id="PRO_0000111323" description="Small ribosomal subunit protein uS9">
    <location>
        <begin position="1"/>
        <end position="130"/>
    </location>
</feature>
<evidence type="ECO:0000255" key="1">
    <source>
        <dbReference type="HAMAP-Rule" id="MF_00532"/>
    </source>
</evidence>
<evidence type="ECO:0000305" key="2"/>
<proteinExistence type="inferred from homology"/>
<gene>
    <name evidence="1" type="primary">rpsI</name>
    <name type="ordered locus">BC_0165</name>
</gene>
<comment type="similarity">
    <text evidence="1">Belongs to the universal ribosomal protein uS9 family.</text>
</comment>
<accession>Q81J12</accession>
<dbReference type="EMBL" id="AE016877">
    <property type="protein sequence ID" value="AAP07245.1"/>
    <property type="molecule type" value="Genomic_DNA"/>
</dbReference>
<dbReference type="RefSeq" id="NP_830044.1">
    <property type="nucleotide sequence ID" value="NC_004722.1"/>
</dbReference>
<dbReference type="RefSeq" id="WP_000079986.1">
    <property type="nucleotide sequence ID" value="NZ_CP138336.1"/>
</dbReference>
<dbReference type="SMR" id="Q81J12"/>
<dbReference type="STRING" id="226900.BC_0165"/>
<dbReference type="GeneID" id="93010909"/>
<dbReference type="KEGG" id="bce:BC0165"/>
<dbReference type="PATRIC" id="fig|226900.8.peg.167"/>
<dbReference type="HOGENOM" id="CLU_046483_2_1_9"/>
<dbReference type="OrthoDB" id="9803965at2"/>
<dbReference type="PRO" id="PR:Q81J12"/>
<dbReference type="Proteomes" id="UP000001417">
    <property type="component" value="Chromosome"/>
</dbReference>
<dbReference type="GO" id="GO:0022627">
    <property type="term" value="C:cytosolic small ribosomal subunit"/>
    <property type="evidence" value="ECO:0000318"/>
    <property type="project" value="GO_Central"/>
</dbReference>
<dbReference type="GO" id="GO:0003723">
    <property type="term" value="F:RNA binding"/>
    <property type="evidence" value="ECO:0000318"/>
    <property type="project" value="GO_Central"/>
</dbReference>
<dbReference type="GO" id="GO:0003735">
    <property type="term" value="F:structural constituent of ribosome"/>
    <property type="evidence" value="ECO:0000318"/>
    <property type="project" value="GO_Central"/>
</dbReference>
<dbReference type="GO" id="GO:0006412">
    <property type="term" value="P:translation"/>
    <property type="evidence" value="ECO:0007669"/>
    <property type="project" value="UniProtKB-UniRule"/>
</dbReference>
<dbReference type="FunFam" id="3.30.230.10:FF:000001">
    <property type="entry name" value="30S ribosomal protein S9"/>
    <property type="match status" value="1"/>
</dbReference>
<dbReference type="Gene3D" id="3.30.230.10">
    <property type="match status" value="1"/>
</dbReference>
<dbReference type="HAMAP" id="MF_00532_B">
    <property type="entry name" value="Ribosomal_uS9_B"/>
    <property type="match status" value="1"/>
</dbReference>
<dbReference type="InterPro" id="IPR020568">
    <property type="entry name" value="Ribosomal_Su5_D2-typ_SF"/>
</dbReference>
<dbReference type="InterPro" id="IPR000754">
    <property type="entry name" value="Ribosomal_uS9"/>
</dbReference>
<dbReference type="InterPro" id="IPR023035">
    <property type="entry name" value="Ribosomal_uS9_bac/plastid"/>
</dbReference>
<dbReference type="InterPro" id="IPR020574">
    <property type="entry name" value="Ribosomal_uS9_CS"/>
</dbReference>
<dbReference type="InterPro" id="IPR014721">
    <property type="entry name" value="Ribsml_uS5_D2-typ_fold_subgr"/>
</dbReference>
<dbReference type="NCBIfam" id="NF001099">
    <property type="entry name" value="PRK00132.1"/>
    <property type="match status" value="1"/>
</dbReference>
<dbReference type="PANTHER" id="PTHR21569">
    <property type="entry name" value="RIBOSOMAL PROTEIN S9"/>
    <property type="match status" value="1"/>
</dbReference>
<dbReference type="PANTHER" id="PTHR21569:SF1">
    <property type="entry name" value="SMALL RIBOSOMAL SUBUNIT PROTEIN US9M"/>
    <property type="match status" value="1"/>
</dbReference>
<dbReference type="Pfam" id="PF00380">
    <property type="entry name" value="Ribosomal_S9"/>
    <property type="match status" value="1"/>
</dbReference>
<dbReference type="SUPFAM" id="SSF54211">
    <property type="entry name" value="Ribosomal protein S5 domain 2-like"/>
    <property type="match status" value="1"/>
</dbReference>
<dbReference type="PROSITE" id="PS00360">
    <property type="entry name" value="RIBOSOMAL_S9"/>
    <property type="match status" value="1"/>
</dbReference>
<organism>
    <name type="scientific">Bacillus cereus (strain ATCC 14579 / DSM 31 / CCUG 7414 / JCM 2152 / NBRC 15305 / NCIMB 9373 / NCTC 2599 / NRRL B-3711)</name>
    <dbReference type="NCBI Taxonomy" id="226900"/>
    <lineage>
        <taxon>Bacteria</taxon>
        <taxon>Bacillati</taxon>
        <taxon>Bacillota</taxon>
        <taxon>Bacilli</taxon>
        <taxon>Bacillales</taxon>
        <taxon>Bacillaceae</taxon>
        <taxon>Bacillus</taxon>
        <taxon>Bacillus cereus group</taxon>
    </lineage>
</organism>